<protein>
    <recommendedName>
        <fullName>Transcriptional activator of proteases prtT</fullName>
    </recommendedName>
    <alternativeName>
        <fullName>Zn(2)-C6 zinc finger-containing protein prtT</fullName>
    </alternativeName>
</protein>
<feature type="chain" id="PRO_0000407032" description="Transcriptional activator of proteases prtT">
    <location>
        <begin position="1"/>
        <end position="696"/>
    </location>
</feature>
<feature type="DNA-binding region" description="Zn(2)-C6 fungal-type" evidence="1">
    <location>
        <begin position="136"/>
        <end position="165"/>
    </location>
</feature>
<feature type="region of interest" description="Disordered" evidence="2">
    <location>
        <begin position="106"/>
        <end position="126"/>
    </location>
</feature>
<evidence type="ECO:0000255" key="1">
    <source>
        <dbReference type="PROSITE-ProRule" id="PRU00227"/>
    </source>
</evidence>
<evidence type="ECO:0000256" key="2">
    <source>
        <dbReference type="SAM" id="MobiDB-lite"/>
    </source>
</evidence>
<evidence type="ECO:0000269" key="3">
    <source>
    </source>
</evidence>
<evidence type="ECO:0000269" key="4">
    <source>
    </source>
</evidence>
<evidence type="ECO:0000305" key="5"/>
<reference key="1">
    <citation type="journal article" date="2005" name="Nature">
        <title>Genomic sequence of the pathogenic and allergenic filamentous fungus Aspergillus fumigatus.</title>
        <authorList>
            <person name="Nierman W.C."/>
            <person name="Pain A."/>
            <person name="Anderson M.J."/>
            <person name="Wortman J.R."/>
            <person name="Kim H.S."/>
            <person name="Arroyo J."/>
            <person name="Berriman M."/>
            <person name="Abe K."/>
            <person name="Archer D.B."/>
            <person name="Bermejo C."/>
            <person name="Bennett J.W."/>
            <person name="Bowyer P."/>
            <person name="Chen D."/>
            <person name="Collins M."/>
            <person name="Coulsen R."/>
            <person name="Davies R."/>
            <person name="Dyer P.S."/>
            <person name="Farman M.L."/>
            <person name="Fedorova N."/>
            <person name="Fedorova N.D."/>
            <person name="Feldblyum T.V."/>
            <person name="Fischer R."/>
            <person name="Fosker N."/>
            <person name="Fraser A."/>
            <person name="Garcia J.L."/>
            <person name="Garcia M.J."/>
            <person name="Goble A."/>
            <person name="Goldman G.H."/>
            <person name="Gomi K."/>
            <person name="Griffith-Jones S."/>
            <person name="Gwilliam R."/>
            <person name="Haas B.J."/>
            <person name="Haas H."/>
            <person name="Harris D.E."/>
            <person name="Horiuchi H."/>
            <person name="Huang J."/>
            <person name="Humphray S."/>
            <person name="Jimenez J."/>
            <person name="Keller N."/>
            <person name="Khouri H."/>
            <person name="Kitamoto K."/>
            <person name="Kobayashi T."/>
            <person name="Konzack S."/>
            <person name="Kulkarni R."/>
            <person name="Kumagai T."/>
            <person name="Lafton A."/>
            <person name="Latge J.-P."/>
            <person name="Li W."/>
            <person name="Lord A."/>
            <person name="Lu C."/>
            <person name="Majoros W.H."/>
            <person name="May G.S."/>
            <person name="Miller B.L."/>
            <person name="Mohamoud Y."/>
            <person name="Molina M."/>
            <person name="Monod M."/>
            <person name="Mouyna I."/>
            <person name="Mulligan S."/>
            <person name="Murphy L.D."/>
            <person name="O'Neil S."/>
            <person name="Paulsen I."/>
            <person name="Penalva M.A."/>
            <person name="Pertea M."/>
            <person name="Price C."/>
            <person name="Pritchard B.L."/>
            <person name="Quail M.A."/>
            <person name="Rabbinowitsch E."/>
            <person name="Rawlins N."/>
            <person name="Rajandream M.A."/>
            <person name="Reichard U."/>
            <person name="Renauld H."/>
            <person name="Robson G.D."/>
            <person name="Rodriguez de Cordoba S."/>
            <person name="Rodriguez-Pena J.M."/>
            <person name="Ronning C.M."/>
            <person name="Rutter S."/>
            <person name="Salzberg S.L."/>
            <person name="Sanchez M."/>
            <person name="Sanchez-Ferrero J.C."/>
            <person name="Saunders D."/>
            <person name="Seeger K."/>
            <person name="Squares R."/>
            <person name="Squares S."/>
            <person name="Takeuchi M."/>
            <person name="Tekaia F."/>
            <person name="Turner G."/>
            <person name="Vazquez de Aldana C.R."/>
            <person name="Weidman J."/>
            <person name="White O."/>
            <person name="Woodward J.R."/>
            <person name="Yu J.-H."/>
            <person name="Fraser C.M."/>
            <person name="Galagan J.E."/>
            <person name="Asai K."/>
            <person name="Machida M."/>
            <person name="Hall N."/>
            <person name="Barrell B.G."/>
            <person name="Denning D.W."/>
        </authorList>
    </citation>
    <scope>NUCLEOTIDE SEQUENCE [LARGE SCALE GENOMIC DNA]</scope>
    <source>
        <strain>ATCC MYA-4609 / CBS 101355 / FGSC A1100 / Af293</strain>
    </source>
</reference>
<reference key="2">
    <citation type="journal article" date="2009" name="Infect. Immun.">
        <title>A regulator of Aspergillus fumigatus extracellular proteolytic activity is dispensable for virulence.</title>
        <authorList>
            <person name="Bergmann A."/>
            <person name="Hartmann T."/>
            <person name="Cairns T."/>
            <person name="Bignell E.M."/>
            <person name="Krappmann S."/>
        </authorList>
    </citation>
    <scope>FUNCTION</scope>
</reference>
<reference key="3">
    <citation type="journal article" date="2009" name="Infect. Immun.">
        <title>Transcription factor PrtT controls expression of multiple secreted proteases in the human pathogenic mold Aspergillus fumigatus.</title>
        <authorList>
            <person name="Sharon H."/>
            <person name="Hagag S."/>
            <person name="Osherov N."/>
        </authorList>
    </citation>
    <scope>FUNCTION</scope>
</reference>
<sequence length="696" mass="78951">MMHIQTLRKITILDVQDKQRCLSTNQNVPDNVFQLIACWCYFPPFLSIAKIKPLIALKAGISENPVLIGCRRIKMAHCPYSEAMTRTTSVEDVKFEIPAWDNSNVDVADGSGRPESSTSGDTIRPKGRIRRSMTACNTCRKLKTRCDLDPRGHACRRCLSLRIECKLPETAERFQDNASMWSDATAAIPSIEERLISLERSMTEMTSMMRRMMDRSPSISGSSVSMLTRSGITDETASIEGSQSSSFAPRPIRLFQDLQSDFTGEANVLPADSRSLGDLFTKGIIDPKLSQKLIQLFVDHFGIWISVDNPSDIHNELRATDPLLYSTACLLASRYVPGIPLSVIHAMYLQIRHATVNVLWNKTPLKHETLQALALLALWPTAVQKETPMDSWLLSGISINHAIISFDFLNHAPSDLIVDNDMVAKLRVWNALCLTQLQSAIGNARPFHIQQRYLEHCPRLLEHPAATFEDGKIVAEIQLYLIALKLQNFSHRMRLGDFEYEEIERWKMEWAHLLKLSLWYCQLLLYRTAMRFHWESEHLISEILRNSRLILSKFLLVRFPNALAFPDQIYYIVGYAALNLCDFSPMDPLIDQVQTFLLHLSPNEDHIAYRFSYTITELKRRCATGPNPHNVVKGAFGDTRKLSMGQQIPFMNPLMDTMMGEYGGLEHLIPEVPPNSLPDMLTSVAGELQAFRTAIL</sequence>
<comment type="function">
    <text evidence="3 4">Transcription factor required for protein utilization and degradation. Regulates transcription of major secreted proteases including a serine alkaline protease (alk1), a metalloprotease (mep), an aspergillopepsin (pep1), a sedolisin (sed2) and two dipeptidyl-peptidases (dppIV and dppV). However, it is not a virulence determinant in leukopenic mice.</text>
</comment>
<comment type="subcellular location">
    <subcellularLocation>
        <location evidence="1">Nucleus</location>
    </subcellularLocation>
</comment>
<comment type="similarity">
    <text evidence="5">Belongs to the prtT family.</text>
</comment>
<accession>Q4WPQ8</accession>
<proteinExistence type="inferred from homology"/>
<keyword id="KW-0238">DNA-binding</keyword>
<keyword id="KW-0479">Metal-binding</keyword>
<keyword id="KW-0539">Nucleus</keyword>
<keyword id="KW-1185">Reference proteome</keyword>
<keyword id="KW-0804">Transcription</keyword>
<keyword id="KW-0805">Transcription regulation</keyword>
<keyword id="KW-0862">Zinc</keyword>
<name>PRTT_ASPFU</name>
<organism>
    <name type="scientific">Aspergillus fumigatus (strain ATCC MYA-4609 / CBS 101355 / FGSC A1100 / Af293)</name>
    <name type="common">Neosartorya fumigata</name>
    <dbReference type="NCBI Taxonomy" id="330879"/>
    <lineage>
        <taxon>Eukaryota</taxon>
        <taxon>Fungi</taxon>
        <taxon>Dikarya</taxon>
        <taxon>Ascomycota</taxon>
        <taxon>Pezizomycotina</taxon>
        <taxon>Eurotiomycetes</taxon>
        <taxon>Eurotiomycetidae</taxon>
        <taxon>Eurotiales</taxon>
        <taxon>Aspergillaceae</taxon>
        <taxon>Aspergillus</taxon>
        <taxon>Aspergillus subgen. Fumigati</taxon>
    </lineage>
</organism>
<gene>
    <name type="primary">prtT</name>
    <name type="ORF">AFUA_4G10120</name>
</gene>
<dbReference type="EMBL" id="AAHF01000005">
    <property type="protein sequence ID" value="EAL89776.1"/>
    <property type="molecule type" value="Genomic_DNA"/>
</dbReference>
<dbReference type="RefSeq" id="XP_751814.1">
    <property type="nucleotide sequence ID" value="XM_746721.1"/>
</dbReference>
<dbReference type="FunCoup" id="Q4WPQ8">
    <property type="interactions" value="195"/>
</dbReference>
<dbReference type="STRING" id="330879.Q4WPQ8"/>
<dbReference type="EnsemblFungi" id="EAL89776">
    <property type="protein sequence ID" value="EAL89776"/>
    <property type="gene ID" value="AFUA_4G10120"/>
</dbReference>
<dbReference type="GeneID" id="3509345"/>
<dbReference type="KEGG" id="afm:AFUA_4G10120"/>
<dbReference type="VEuPathDB" id="FungiDB:Afu4g10120"/>
<dbReference type="eggNOG" id="ENOG502QU5T">
    <property type="taxonomic scope" value="Eukaryota"/>
</dbReference>
<dbReference type="HOGENOM" id="CLU_030102_0_0_1"/>
<dbReference type="InParanoid" id="Q4WPQ8"/>
<dbReference type="OMA" id="EMTSMMR"/>
<dbReference type="OrthoDB" id="2595934at2759"/>
<dbReference type="PHI-base" id="PHI:2809"/>
<dbReference type="PHI-base" id="PHI:2828"/>
<dbReference type="Proteomes" id="UP000002530">
    <property type="component" value="Chromosome 4"/>
</dbReference>
<dbReference type="GO" id="GO:0005634">
    <property type="term" value="C:nucleus"/>
    <property type="evidence" value="ECO:0000318"/>
    <property type="project" value="GO_Central"/>
</dbReference>
<dbReference type="GO" id="GO:0000981">
    <property type="term" value="F:DNA-binding transcription factor activity, RNA polymerase II-specific"/>
    <property type="evidence" value="ECO:0000318"/>
    <property type="project" value="GO_Central"/>
</dbReference>
<dbReference type="GO" id="GO:0000976">
    <property type="term" value="F:transcription cis-regulatory region binding"/>
    <property type="evidence" value="ECO:0000318"/>
    <property type="project" value="GO_Central"/>
</dbReference>
<dbReference type="GO" id="GO:0008270">
    <property type="term" value="F:zinc ion binding"/>
    <property type="evidence" value="ECO:0007669"/>
    <property type="project" value="InterPro"/>
</dbReference>
<dbReference type="GO" id="GO:0045893">
    <property type="term" value="P:positive regulation of DNA-templated transcription"/>
    <property type="evidence" value="ECO:0000315"/>
    <property type="project" value="UniProtKB"/>
</dbReference>
<dbReference type="GO" id="GO:0030163">
    <property type="term" value="P:protein catabolic process"/>
    <property type="evidence" value="ECO:0000315"/>
    <property type="project" value="AspGD"/>
</dbReference>
<dbReference type="GO" id="GO:0006355">
    <property type="term" value="P:regulation of DNA-templated transcription"/>
    <property type="evidence" value="ECO:0000318"/>
    <property type="project" value="GO_Central"/>
</dbReference>
<dbReference type="GO" id="GO:0042176">
    <property type="term" value="P:regulation of protein catabolic process"/>
    <property type="evidence" value="ECO:0000315"/>
    <property type="project" value="UniProtKB"/>
</dbReference>
<dbReference type="CDD" id="cd00067">
    <property type="entry name" value="GAL4"/>
    <property type="match status" value="1"/>
</dbReference>
<dbReference type="FunFam" id="4.10.240.10:FF:000011">
    <property type="entry name" value="Transcriptional activator of proteases prtT"/>
    <property type="match status" value="1"/>
</dbReference>
<dbReference type="Gene3D" id="4.10.240.10">
    <property type="entry name" value="Zn(2)-C6 fungal-type DNA-binding domain"/>
    <property type="match status" value="1"/>
</dbReference>
<dbReference type="InterPro" id="IPR051089">
    <property type="entry name" value="prtT"/>
</dbReference>
<dbReference type="InterPro" id="IPR036864">
    <property type="entry name" value="Zn2-C6_fun-type_DNA-bd_sf"/>
</dbReference>
<dbReference type="InterPro" id="IPR001138">
    <property type="entry name" value="Zn2Cys6_DnaBD"/>
</dbReference>
<dbReference type="PANTHER" id="PTHR31845">
    <property type="entry name" value="FINGER DOMAIN PROTEIN, PUTATIVE-RELATED"/>
    <property type="match status" value="1"/>
</dbReference>
<dbReference type="PANTHER" id="PTHR31845:SF34">
    <property type="entry name" value="TRANSCRIPTIONAL ACTIVATOR OF PROTEASES PRTT"/>
    <property type="match status" value="1"/>
</dbReference>
<dbReference type="Pfam" id="PF00172">
    <property type="entry name" value="Zn_clus"/>
    <property type="match status" value="1"/>
</dbReference>
<dbReference type="SMART" id="SM00066">
    <property type="entry name" value="GAL4"/>
    <property type="match status" value="1"/>
</dbReference>
<dbReference type="SUPFAM" id="SSF57701">
    <property type="entry name" value="Zn2/Cys6 DNA-binding domain"/>
    <property type="match status" value="1"/>
</dbReference>
<dbReference type="PROSITE" id="PS00463">
    <property type="entry name" value="ZN2_CY6_FUNGAL_1"/>
    <property type="match status" value="1"/>
</dbReference>
<dbReference type="PROSITE" id="PS50048">
    <property type="entry name" value="ZN2_CY6_FUNGAL_2"/>
    <property type="match status" value="1"/>
</dbReference>